<reference key="1">
    <citation type="submission" date="2008-10" db="EMBL/GenBank/DDBJ databases">
        <title>Genome sequence of Bacillus anthracis str. CDC 684.</title>
        <authorList>
            <person name="Dodson R.J."/>
            <person name="Munk A.C."/>
            <person name="Brettin T."/>
            <person name="Bruce D."/>
            <person name="Detter C."/>
            <person name="Tapia R."/>
            <person name="Han C."/>
            <person name="Sutton G."/>
            <person name="Sims D."/>
        </authorList>
    </citation>
    <scope>NUCLEOTIDE SEQUENCE [LARGE SCALE GENOMIC DNA]</scope>
    <source>
        <strain>CDC 684 / NRRL 3495</strain>
    </source>
</reference>
<sequence>MAVITKIEVQKRSKERFNIYIDKGQGEEYGFSVNEVILIKHGLQKGLEIDEIALGNILYNEEVQKAYLQAISYLSYQMRTKLEIEDFLRKKEVGQAIISEVVSKLLHDRYINDKEYAILYTRTQSNVNRKGPTVIKRELLNKGVQDLIIMHSLQEYTKEKQIENALILIEKKKKSYQKHSFLQMKLKLDEMLVRKGYSRDVIQICLEELKDEKDDEKQQEALHYHGNKYYEKYKKYDGWTFENKMKQALYRKGFSIDEIEIFLQMKREEG</sequence>
<protein>
    <recommendedName>
        <fullName evidence="1">Regulatory protein RecX</fullName>
    </recommendedName>
</protein>
<proteinExistence type="inferred from homology"/>
<name>RECX_BACAC</name>
<feature type="chain" id="PRO_1000164011" description="Regulatory protein RecX">
    <location>
        <begin position="1"/>
        <end position="270"/>
    </location>
</feature>
<evidence type="ECO:0000255" key="1">
    <source>
        <dbReference type="HAMAP-Rule" id="MF_01114"/>
    </source>
</evidence>
<organism>
    <name type="scientific">Bacillus anthracis (strain CDC 684 / NRRL 3495)</name>
    <dbReference type="NCBI Taxonomy" id="568206"/>
    <lineage>
        <taxon>Bacteria</taxon>
        <taxon>Bacillati</taxon>
        <taxon>Bacillota</taxon>
        <taxon>Bacilli</taxon>
        <taxon>Bacillales</taxon>
        <taxon>Bacillaceae</taxon>
        <taxon>Bacillus</taxon>
        <taxon>Bacillus cereus group</taxon>
    </lineage>
</organism>
<accession>C3LHB6</accession>
<dbReference type="EMBL" id="CP001215">
    <property type="protein sequence ID" value="ACP12564.1"/>
    <property type="molecule type" value="Genomic_DNA"/>
</dbReference>
<dbReference type="RefSeq" id="WP_000268518.1">
    <property type="nucleotide sequence ID" value="NC_012581.1"/>
</dbReference>
<dbReference type="SMR" id="C3LHB6"/>
<dbReference type="GeneID" id="45020565"/>
<dbReference type="KEGG" id="bah:BAMEG_4090"/>
<dbReference type="HOGENOM" id="CLU_066607_4_0_9"/>
<dbReference type="GO" id="GO:0005737">
    <property type="term" value="C:cytoplasm"/>
    <property type="evidence" value="ECO:0007669"/>
    <property type="project" value="UniProtKB-SubCell"/>
</dbReference>
<dbReference type="GO" id="GO:0006282">
    <property type="term" value="P:regulation of DNA repair"/>
    <property type="evidence" value="ECO:0007669"/>
    <property type="project" value="UniProtKB-UniRule"/>
</dbReference>
<dbReference type="Gene3D" id="1.10.10.10">
    <property type="entry name" value="Winged helix-like DNA-binding domain superfamily/Winged helix DNA-binding domain"/>
    <property type="match status" value="4"/>
</dbReference>
<dbReference type="HAMAP" id="MF_01114">
    <property type="entry name" value="RecX"/>
    <property type="match status" value="1"/>
</dbReference>
<dbReference type="InterPro" id="IPR053926">
    <property type="entry name" value="RecX_HTH_1st"/>
</dbReference>
<dbReference type="InterPro" id="IPR053924">
    <property type="entry name" value="RecX_HTH_2nd"/>
</dbReference>
<dbReference type="InterPro" id="IPR053925">
    <property type="entry name" value="RecX_HTH_3rd"/>
</dbReference>
<dbReference type="InterPro" id="IPR003783">
    <property type="entry name" value="Regulatory_RecX"/>
</dbReference>
<dbReference type="InterPro" id="IPR036388">
    <property type="entry name" value="WH-like_DNA-bd_sf"/>
</dbReference>
<dbReference type="NCBIfam" id="NF010733">
    <property type="entry name" value="PRK14135.1"/>
    <property type="match status" value="1"/>
</dbReference>
<dbReference type="PANTHER" id="PTHR33602">
    <property type="entry name" value="REGULATORY PROTEIN RECX FAMILY PROTEIN"/>
    <property type="match status" value="1"/>
</dbReference>
<dbReference type="PANTHER" id="PTHR33602:SF1">
    <property type="entry name" value="REGULATORY PROTEIN RECX FAMILY PROTEIN"/>
    <property type="match status" value="1"/>
</dbReference>
<dbReference type="Pfam" id="PF21982">
    <property type="entry name" value="RecX_HTH1"/>
    <property type="match status" value="1"/>
</dbReference>
<dbReference type="Pfam" id="PF02631">
    <property type="entry name" value="RecX_HTH2"/>
    <property type="match status" value="1"/>
</dbReference>
<dbReference type="Pfam" id="PF21981">
    <property type="entry name" value="RecX_HTH3"/>
    <property type="match status" value="2"/>
</dbReference>
<comment type="function">
    <text evidence="1">Modulates RecA activity.</text>
</comment>
<comment type="subcellular location">
    <subcellularLocation>
        <location evidence="1">Cytoplasm</location>
    </subcellularLocation>
</comment>
<comment type="similarity">
    <text evidence="1">Belongs to the RecX family.</text>
</comment>
<gene>
    <name evidence="1" type="primary">recX</name>
    <name type="ordered locus">BAMEG_4090</name>
</gene>
<keyword id="KW-0963">Cytoplasm</keyword>